<accession>Q8FH85</accession>
<evidence type="ECO:0000255" key="1">
    <source>
        <dbReference type="HAMAP-Rule" id="MF_01270"/>
    </source>
</evidence>
<sequence>MKSGRFIGVMSGTSLDGVDVVLATIDEHRVAQLASLSWPIPVSLKQAVLDICQGQQLTLSQFGQLDTQLGRLFADAVNALLKEQNLQARDIVAIGCHGQTVWHEPTGVAPHTLQIGDNNQIVARTGITVVGDFRRRDIALGGQGAPLVPAFHHALLAHPTERRMVLNIGGIANLSLLIPGQPVGGYDTGPGNMLMDAWIWRQAGKPYDKDAEWARAGKVILPLLQNMLCDPYFSQPAPKSTGREYFNYGWLERHLRHFPGVDPRDVQATLAELTAVTISEQVLLSGGCERLMVCGGGSRNPLLMARLAALLPGTEVTTTDAVGISGDDMEALAFAWLAWRTLAGLPGNLPSVTGASQETVLGAIFPANP</sequence>
<feature type="chain" id="PRO_0000250000" description="Anhydro-N-acetylmuramic acid kinase">
    <location>
        <begin position="1"/>
        <end position="369"/>
    </location>
</feature>
<feature type="binding site" evidence="1">
    <location>
        <begin position="12"/>
        <end position="19"/>
    </location>
    <ligand>
        <name>ATP</name>
        <dbReference type="ChEBI" id="CHEBI:30616"/>
    </ligand>
</feature>
<keyword id="KW-0067">ATP-binding</keyword>
<keyword id="KW-0119">Carbohydrate metabolism</keyword>
<keyword id="KW-0418">Kinase</keyword>
<keyword id="KW-0547">Nucleotide-binding</keyword>
<keyword id="KW-1185">Reference proteome</keyword>
<keyword id="KW-0808">Transferase</keyword>
<organism>
    <name type="scientific">Escherichia coli O6:H1 (strain CFT073 / ATCC 700928 / UPEC)</name>
    <dbReference type="NCBI Taxonomy" id="199310"/>
    <lineage>
        <taxon>Bacteria</taxon>
        <taxon>Pseudomonadati</taxon>
        <taxon>Pseudomonadota</taxon>
        <taxon>Gammaproteobacteria</taxon>
        <taxon>Enterobacterales</taxon>
        <taxon>Enterobacteriaceae</taxon>
        <taxon>Escherichia</taxon>
    </lineage>
</organism>
<dbReference type="EC" id="2.7.1.170" evidence="1"/>
<dbReference type="EMBL" id="AE014075">
    <property type="protein sequence ID" value="AAN80492.1"/>
    <property type="molecule type" value="Genomic_DNA"/>
</dbReference>
<dbReference type="RefSeq" id="WP_000835063.1">
    <property type="nucleotide sequence ID" value="NZ_CP051263.1"/>
</dbReference>
<dbReference type="SMR" id="Q8FH85"/>
<dbReference type="STRING" id="199310.c2032"/>
<dbReference type="KEGG" id="ecc:c2032"/>
<dbReference type="eggNOG" id="COG2377">
    <property type="taxonomic scope" value="Bacteria"/>
</dbReference>
<dbReference type="HOGENOM" id="CLU_038782_0_0_6"/>
<dbReference type="BioCyc" id="ECOL199310:C2032-MONOMER"/>
<dbReference type="UniPathway" id="UPA00343"/>
<dbReference type="UniPathway" id="UPA00544"/>
<dbReference type="Proteomes" id="UP000001410">
    <property type="component" value="Chromosome"/>
</dbReference>
<dbReference type="GO" id="GO:0005524">
    <property type="term" value="F:ATP binding"/>
    <property type="evidence" value="ECO:0007669"/>
    <property type="project" value="UniProtKB-UniRule"/>
</dbReference>
<dbReference type="GO" id="GO:0016301">
    <property type="term" value="F:kinase activity"/>
    <property type="evidence" value="ECO:0007669"/>
    <property type="project" value="UniProtKB-KW"/>
</dbReference>
<dbReference type="GO" id="GO:0016773">
    <property type="term" value="F:phosphotransferase activity, alcohol group as acceptor"/>
    <property type="evidence" value="ECO:0007669"/>
    <property type="project" value="UniProtKB-UniRule"/>
</dbReference>
<dbReference type="GO" id="GO:0097175">
    <property type="term" value="P:1,6-anhydro-N-acetyl-beta-muramic acid catabolic process"/>
    <property type="evidence" value="ECO:0007669"/>
    <property type="project" value="UniProtKB-UniRule"/>
</dbReference>
<dbReference type="GO" id="GO:0006040">
    <property type="term" value="P:amino sugar metabolic process"/>
    <property type="evidence" value="ECO:0007669"/>
    <property type="project" value="InterPro"/>
</dbReference>
<dbReference type="GO" id="GO:0009254">
    <property type="term" value="P:peptidoglycan turnover"/>
    <property type="evidence" value="ECO:0007669"/>
    <property type="project" value="UniProtKB-UniRule"/>
</dbReference>
<dbReference type="CDD" id="cd24050">
    <property type="entry name" value="ASKHA_NBD_ANMK"/>
    <property type="match status" value="1"/>
</dbReference>
<dbReference type="FunFam" id="3.30.420.40:FF:000090">
    <property type="entry name" value="Anhydro-N-acetylmuramic acid kinase"/>
    <property type="match status" value="1"/>
</dbReference>
<dbReference type="Gene3D" id="3.30.420.40">
    <property type="match status" value="2"/>
</dbReference>
<dbReference type="HAMAP" id="MF_01270">
    <property type="entry name" value="AnhMurNAc_kinase"/>
    <property type="match status" value="1"/>
</dbReference>
<dbReference type="InterPro" id="IPR005338">
    <property type="entry name" value="Anhydro_N_Ac-Mur_kinase"/>
</dbReference>
<dbReference type="InterPro" id="IPR043129">
    <property type="entry name" value="ATPase_NBD"/>
</dbReference>
<dbReference type="NCBIfam" id="NF007138">
    <property type="entry name" value="PRK09585.1-1"/>
    <property type="match status" value="1"/>
</dbReference>
<dbReference type="NCBIfam" id="NF007139">
    <property type="entry name" value="PRK09585.1-3"/>
    <property type="match status" value="1"/>
</dbReference>
<dbReference type="NCBIfam" id="NF007148">
    <property type="entry name" value="PRK09585.3-2"/>
    <property type="match status" value="1"/>
</dbReference>
<dbReference type="PANTHER" id="PTHR30605">
    <property type="entry name" value="ANHYDRO-N-ACETYLMURAMIC ACID KINASE"/>
    <property type="match status" value="1"/>
</dbReference>
<dbReference type="PANTHER" id="PTHR30605:SF0">
    <property type="entry name" value="ANHYDRO-N-ACETYLMURAMIC ACID KINASE"/>
    <property type="match status" value="1"/>
</dbReference>
<dbReference type="Pfam" id="PF03702">
    <property type="entry name" value="AnmK"/>
    <property type="match status" value="1"/>
</dbReference>
<dbReference type="SUPFAM" id="SSF53067">
    <property type="entry name" value="Actin-like ATPase domain"/>
    <property type="match status" value="1"/>
</dbReference>
<proteinExistence type="inferred from homology"/>
<name>ANMK_ECOL6</name>
<protein>
    <recommendedName>
        <fullName evidence="1">Anhydro-N-acetylmuramic acid kinase</fullName>
        <ecNumber evidence="1">2.7.1.170</ecNumber>
    </recommendedName>
    <alternativeName>
        <fullName evidence="1">AnhMurNAc kinase</fullName>
    </alternativeName>
</protein>
<comment type="function">
    <text evidence="1">Catalyzes the specific phosphorylation of 1,6-anhydro-N-acetylmuramic acid (anhMurNAc) with the simultaneous cleavage of the 1,6-anhydro ring, generating MurNAc-6-P. Is required for the utilization of anhMurNAc either imported from the medium or derived from its own cell wall murein, and thus plays a role in cell wall recycling.</text>
</comment>
<comment type="catalytic activity">
    <reaction evidence="1">
        <text>1,6-anhydro-N-acetyl-beta-muramate + ATP + H2O = N-acetyl-D-muramate 6-phosphate + ADP + H(+)</text>
        <dbReference type="Rhea" id="RHEA:24952"/>
        <dbReference type="ChEBI" id="CHEBI:15377"/>
        <dbReference type="ChEBI" id="CHEBI:15378"/>
        <dbReference type="ChEBI" id="CHEBI:30616"/>
        <dbReference type="ChEBI" id="CHEBI:58690"/>
        <dbReference type="ChEBI" id="CHEBI:58722"/>
        <dbReference type="ChEBI" id="CHEBI:456216"/>
        <dbReference type="EC" id="2.7.1.170"/>
    </reaction>
</comment>
<comment type="pathway">
    <text evidence="1">Amino-sugar metabolism; 1,6-anhydro-N-acetylmuramate degradation.</text>
</comment>
<comment type="pathway">
    <text evidence="1">Cell wall biogenesis; peptidoglycan recycling.</text>
</comment>
<comment type="similarity">
    <text evidence="1">Belongs to the anhydro-N-acetylmuramic acid kinase family.</text>
</comment>
<reference key="1">
    <citation type="journal article" date="2002" name="Proc. Natl. Acad. Sci. U.S.A.">
        <title>Extensive mosaic structure revealed by the complete genome sequence of uropathogenic Escherichia coli.</title>
        <authorList>
            <person name="Welch R.A."/>
            <person name="Burland V."/>
            <person name="Plunkett G. III"/>
            <person name="Redford P."/>
            <person name="Roesch P."/>
            <person name="Rasko D."/>
            <person name="Buckles E.L."/>
            <person name="Liou S.-R."/>
            <person name="Boutin A."/>
            <person name="Hackett J."/>
            <person name="Stroud D."/>
            <person name="Mayhew G.F."/>
            <person name="Rose D.J."/>
            <person name="Zhou S."/>
            <person name="Schwartz D.C."/>
            <person name="Perna N.T."/>
            <person name="Mobley H.L.T."/>
            <person name="Donnenberg M.S."/>
            <person name="Blattner F.R."/>
        </authorList>
    </citation>
    <scope>NUCLEOTIDE SEQUENCE [LARGE SCALE GENOMIC DNA]</scope>
    <source>
        <strain>CFT073 / ATCC 700928 / UPEC</strain>
    </source>
</reference>
<gene>
    <name evidence="1" type="primary">anmK</name>
    <name type="ordered locus">c2032</name>
</gene>